<sequence length="105" mass="12224">MALRYPMAVGLNKGHKVTKNVGKPRHSRRRGRLTKHTKFVRDMIREVCGFAPYERRAMELLKVSKDKRALKFIKKRVGTHIRAKRKREELSNVLAAMRKAAAKKD</sequence>
<keyword id="KW-0007">Acetylation</keyword>
<keyword id="KW-0963">Cytoplasm</keyword>
<keyword id="KW-1185">Reference proteome</keyword>
<keyword id="KW-0687">Ribonucleoprotein</keyword>
<keyword id="KW-0689">Ribosomal protein</keyword>
<proteinExistence type="inferred from homology"/>
<comment type="function">
    <text evidence="2">Component of the large ribosomal subunit. The ribosome is a large ribonucleoprotein complex responsible for the synthesis of proteins in the cell.</text>
</comment>
<comment type="subunit">
    <text evidence="2">Component of the large ribosomal subunit.</text>
</comment>
<comment type="subcellular location">
    <subcellularLocation>
        <location evidence="2">Cytoplasm</location>
        <location evidence="2">Cytosol</location>
    </subcellularLocation>
    <subcellularLocation>
        <location evidence="2">Cytoplasm</location>
    </subcellularLocation>
    <text evidence="1 2">Detected on cytosolic polysomes.</text>
</comment>
<comment type="similarity">
    <text evidence="3">Belongs to the eukaryotic ribosomal protein eL36 family.</text>
</comment>
<dbReference type="EMBL" id="BC102085">
    <property type="protein sequence ID" value="AAI02086.1"/>
    <property type="molecule type" value="mRNA"/>
</dbReference>
<dbReference type="EMBL" id="BC141994">
    <property type="protein sequence ID" value="AAI41995.1"/>
    <property type="molecule type" value="mRNA"/>
</dbReference>
<dbReference type="RefSeq" id="NP_001071607.1">
    <property type="nucleotide sequence ID" value="NM_001078139.2"/>
</dbReference>
<dbReference type="SMR" id="Q3T171"/>
<dbReference type="FunCoup" id="Q3T171">
    <property type="interactions" value="1905"/>
</dbReference>
<dbReference type="STRING" id="9913.ENSBTAP00000002349"/>
<dbReference type="PaxDb" id="9913-ENSBTAP00000002349"/>
<dbReference type="PeptideAtlas" id="Q3T171"/>
<dbReference type="GeneID" id="768327"/>
<dbReference type="KEGG" id="bta:768327"/>
<dbReference type="CTD" id="25873"/>
<dbReference type="VEuPathDB" id="HostDB:ENSBTAG00000001794"/>
<dbReference type="eggNOG" id="KOG3452">
    <property type="taxonomic scope" value="Eukaryota"/>
</dbReference>
<dbReference type="HOGENOM" id="CLU_140672_2_0_1"/>
<dbReference type="InParanoid" id="Q3T171"/>
<dbReference type="OMA" id="NKGHKTE"/>
<dbReference type="OrthoDB" id="9860663at2759"/>
<dbReference type="TreeFam" id="TF314463"/>
<dbReference type="Reactome" id="R-BTA-156827">
    <property type="pathway name" value="L13a-mediated translational silencing of Ceruloplasmin expression"/>
</dbReference>
<dbReference type="Reactome" id="R-BTA-1799339">
    <property type="pathway name" value="SRP-dependent cotranslational protein targeting to membrane"/>
</dbReference>
<dbReference type="Reactome" id="R-BTA-6791226">
    <property type="pathway name" value="Major pathway of rRNA processing in the nucleolus and cytosol"/>
</dbReference>
<dbReference type="Reactome" id="R-BTA-72689">
    <property type="pathway name" value="Formation of a pool of free 40S subunits"/>
</dbReference>
<dbReference type="Reactome" id="R-BTA-72706">
    <property type="pathway name" value="GTP hydrolysis and joining of the 60S ribosomal subunit"/>
</dbReference>
<dbReference type="Reactome" id="R-BTA-975956">
    <property type="pathway name" value="Nonsense Mediated Decay (NMD) independent of the Exon Junction Complex (EJC)"/>
</dbReference>
<dbReference type="Reactome" id="R-BTA-975957">
    <property type="pathway name" value="Nonsense Mediated Decay (NMD) enhanced by the Exon Junction Complex (EJC)"/>
</dbReference>
<dbReference type="Proteomes" id="UP000009136">
    <property type="component" value="Chromosome 7"/>
</dbReference>
<dbReference type="Bgee" id="ENSBTAG00000001794">
    <property type="expression patterns" value="Expressed in digestive system secreted substance and 110 other cell types or tissues"/>
</dbReference>
<dbReference type="GO" id="GO:0022625">
    <property type="term" value="C:cytosolic large ribosomal subunit"/>
    <property type="evidence" value="ECO:0000318"/>
    <property type="project" value="GO_Central"/>
</dbReference>
<dbReference type="GO" id="GO:0003735">
    <property type="term" value="F:structural constituent of ribosome"/>
    <property type="evidence" value="ECO:0000318"/>
    <property type="project" value="GO_Central"/>
</dbReference>
<dbReference type="GO" id="GO:0002181">
    <property type="term" value="P:cytoplasmic translation"/>
    <property type="evidence" value="ECO:0000318"/>
    <property type="project" value="GO_Central"/>
</dbReference>
<dbReference type="FunFam" id="1.10.10.1760:FF:000002">
    <property type="entry name" value="60S ribosomal protein L36"/>
    <property type="match status" value="1"/>
</dbReference>
<dbReference type="Gene3D" id="1.10.10.1760">
    <property type="entry name" value="60S ribosomal protein L36"/>
    <property type="match status" value="1"/>
</dbReference>
<dbReference type="InterPro" id="IPR000509">
    <property type="entry name" value="Ribosomal_eL36"/>
</dbReference>
<dbReference type="InterPro" id="IPR038097">
    <property type="entry name" value="Ribosomal_eL36_sf"/>
</dbReference>
<dbReference type="PANTHER" id="PTHR10114">
    <property type="entry name" value="60S RIBOSOMAL PROTEIN L36"/>
    <property type="match status" value="1"/>
</dbReference>
<dbReference type="Pfam" id="PF01158">
    <property type="entry name" value="Ribosomal_L36e"/>
    <property type="match status" value="1"/>
</dbReference>
<dbReference type="PROSITE" id="PS01190">
    <property type="entry name" value="RIBOSOMAL_L36E"/>
    <property type="match status" value="1"/>
</dbReference>
<reference key="1">
    <citation type="submission" date="2007-06" db="EMBL/GenBank/DDBJ databases">
        <authorList>
            <consortium name="NIH - Mammalian Gene Collection (MGC) project"/>
        </authorList>
    </citation>
    <scope>NUCLEOTIDE SEQUENCE [LARGE SCALE MRNA]</scope>
    <source>
        <strain>Crossbred X Angus</strain>
        <strain>Hereford</strain>
        <tissue>Fetal pons</tissue>
        <tissue>Ileum</tissue>
    </source>
</reference>
<accession>Q3T171</accession>
<accession>A5PJ75</accession>
<organism>
    <name type="scientific">Bos taurus</name>
    <name type="common">Bovine</name>
    <dbReference type="NCBI Taxonomy" id="9913"/>
    <lineage>
        <taxon>Eukaryota</taxon>
        <taxon>Metazoa</taxon>
        <taxon>Chordata</taxon>
        <taxon>Craniata</taxon>
        <taxon>Vertebrata</taxon>
        <taxon>Euteleostomi</taxon>
        <taxon>Mammalia</taxon>
        <taxon>Eutheria</taxon>
        <taxon>Laurasiatheria</taxon>
        <taxon>Artiodactyla</taxon>
        <taxon>Ruminantia</taxon>
        <taxon>Pecora</taxon>
        <taxon>Bovidae</taxon>
        <taxon>Bovinae</taxon>
        <taxon>Bos</taxon>
    </lineage>
</organism>
<feature type="chain" id="PRO_0000231670" description="Large ribosomal subunit protein eL36">
    <location>
        <begin position="1"/>
        <end position="105"/>
    </location>
</feature>
<feature type="modified residue" description="N6-acetyllysine" evidence="2">
    <location>
        <position position="62"/>
    </location>
</feature>
<name>RL36_BOVIN</name>
<protein>
    <recommendedName>
        <fullName evidence="3">Large ribosomal subunit protein eL36</fullName>
    </recommendedName>
    <alternativeName>
        <fullName>60S ribosomal protein L36</fullName>
    </alternativeName>
</protein>
<evidence type="ECO:0000250" key="1">
    <source>
        <dbReference type="UniProtKB" id="Q2YGT9"/>
    </source>
</evidence>
<evidence type="ECO:0000250" key="2">
    <source>
        <dbReference type="UniProtKB" id="Q9Y3U8"/>
    </source>
</evidence>
<evidence type="ECO:0000305" key="3"/>
<gene>
    <name type="primary">RPL36</name>
</gene>